<name>MNMC_CAMJE</name>
<dbReference type="EC" id="2.1.1.61" evidence="1"/>
<dbReference type="EC" id="1.5.-.-" evidence="1"/>
<dbReference type="EMBL" id="AL111168">
    <property type="protein sequence ID" value="CAL35383.1"/>
    <property type="molecule type" value="Genomic_DNA"/>
</dbReference>
<dbReference type="PIR" id="F81334">
    <property type="entry name" value="F81334"/>
</dbReference>
<dbReference type="RefSeq" id="WP_002853221.1">
    <property type="nucleotide sequence ID" value="NZ_SZUC01000001.1"/>
</dbReference>
<dbReference type="RefSeq" id="YP_002344659.1">
    <property type="nucleotide sequence ID" value="NC_002163.1"/>
</dbReference>
<dbReference type="SMR" id="Q9PN30"/>
<dbReference type="IntAct" id="Q9PN30">
    <property type="interactions" value="6"/>
</dbReference>
<dbReference type="STRING" id="192222.Cj1268c"/>
<dbReference type="PaxDb" id="192222-Cj1268c"/>
<dbReference type="EnsemblBacteria" id="CAL35383">
    <property type="protein sequence ID" value="CAL35383"/>
    <property type="gene ID" value="Cj1268c"/>
</dbReference>
<dbReference type="GeneID" id="905559"/>
<dbReference type="KEGG" id="cje:Cj1268c"/>
<dbReference type="PATRIC" id="fig|192222.6.peg.1251"/>
<dbReference type="eggNOG" id="COG0665">
    <property type="taxonomic scope" value="Bacteria"/>
</dbReference>
<dbReference type="eggNOG" id="COG4121">
    <property type="taxonomic scope" value="Bacteria"/>
</dbReference>
<dbReference type="HOGENOM" id="CLU_022427_2_1_7"/>
<dbReference type="OrthoDB" id="9786494at2"/>
<dbReference type="Proteomes" id="UP000000799">
    <property type="component" value="Chromosome"/>
</dbReference>
<dbReference type="GO" id="GO:0005737">
    <property type="term" value="C:cytoplasm"/>
    <property type="evidence" value="ECO:0007669"/>
    <property type="project" value="UniProtKB-SubCell"/>
</dbReference>
<dbReference type="GO" id="GO:0016645">
    <property type="term" value="F:oxidoreductase activity, acting on the CH-NH group of donors"/>
    <property type="evidence" value="ECO:0007669"/>
    <property type="project" value="InterPro"/>
</dbReference>
<dbReference type="GO" id="GO:0004808">
    <property type="term" value="F:tRNA (5-methylaminomethyl-2-thiouridylate)(34)-methyltransferase activity"/>
    <property type="evidence" value="ECO:0007669"/>
    <property type="project" value="UniProtKB-EC"/>
</dbReference>
<dbReference type="GO" id="GO:0032259">
    <property type="term" value="P:methylation"/>
    <property type="evidence" value="ECO:0007669"/>
    <property type="project" value="UniProtKB-KW"/>
</dbReference>
<dbReference type="GO" id="GO:0008033">
    <property type="term" value="P:tRNA processing"/>
    <property type="evidence" value="ECO:0007669"/>
    <property type="project" value="UniProtKB-KW"/>
</dbReference>
<dbReference type="Gene3D" id="3.30.9.10">
    <property type="entry name" value="D-Amino Acid Oxidase, subunit A, domain 2"/>
    <property type="match status" value="1"/>
</dbReference>
<dbReference type="Gene3D" id="3.50.50.60">
    <property type="entry name" value="FAD/NAD(P)-binding domain"/>
    <property type="match status" value="1"/>
</dbReference>
<dbReference type="Gene3D" id="3.40.50.150">
    <property type="entry name" value="Vaccinia Virus protein VP39"/>
    <property type="match status" value="1"/>
</dbReference>
<dbReference type="HAMAP" id="MF_01102">
    <property type="entry name" value="MnmC"/>
    <property type="match status" value="1"/>
</dbReference>
<dbReference type="InterPro" id="IPR006076">
    <property type="entry name" value="FAD-dep_OxRdtase"/>
</dbReference>
<dbReference type="InterPro" id="IPR036188">
    <property type="entry name" value="FAD/NAD-bd_sf"/>
</dbReference>
<dbReference type="InterPro" id="IPR008471">
    <property type="entry name" value="MnmC-like_methylTransf"/>
</dbReference>
<dbReference type="InterPro" id="IPR029063">
    <property type="entry name" value="SAM-dependent_MTases_sf"/>
</dbReference>
<dbReference type="InterPro" id="IPR023032">
    <property type="entry name" value="tRNA_MAMT_biosynth_bifunc_MnmC"/>
</dbReference>
<dbReference type="InterPro" id="IPR047785">
    <property type="entry name" value="tRNA_MNMC2"/>
</dbReference>
<dbReference type="InterPro" id="IPR017610">
    <property type="entry name" value="tRNA_S-uridine_synth_MnmC_C"/>
</dbReference>
<dbReference type="NCBIfam" id="TIGR03197">
    <property type="entry name" value="MnmC_Cterm"/>
    <property type="match status" value="1"/>
</dbReference>
<dbReference type="NCBIfam" id="NF002481">
    <property type="entry name" value="PRK01747.1-2"/>
    <property type="match status" value="1"/>
</dbReference>
<dbReference type="NCBIfam" id="NF033855">
    <property type="entry name" value="tRNA_MNMC2"/>
    <property type="match status" value="1"/>
</dbReference>
<dbReference type="PANTHER" id="PTHR13847">
    <property type="entry name" value="SARCOSINE DEHYDROGENASE-RELATED"/>
    <property type="match status" value="1"/>
</dbReference>
<dbReference type="PANTHER" id="PTHR13847:SF283">
    <property type="entry name" value="TRNA 5-METHYLAMINOMETHYL-2-THIOURIDINE BIOSYNTHESIS BIFUNCTIONAL PROTEIN MNMC"/>
    <property type="match status" value="1"/>
</dbReference>
<dbReference type="Pfam" id="PF01266">
    <property type="entry name" value="DAO"/>
    <property type="match status" value="1"/>
</dbReference>
<dbReference type="Pfam" id="PF05430">
    <property type="entry name" value="Methyltransf_30"/>
    <property type="match status" value="1"/>
</dbReference>
<dbReference type="SUPFAM" id="SSF51905">
    <property type="entry name" value="FAD/NAD(P)-binding domain"/>
    <property type="match status" value="1"/>
</dbReference>
<proteinExistence type="inferred from homology"/>
<reference key="1">
    <citation type="journal article" date="2000" name="Nature">
        <title>The genome sequence of the food-borne pathogen Campylobacter jejuni reveals hypervariable sequences.</title>
        <authorList>
            <person name="Parkhill J."/>
            <person name="Wren B.W."/>
            <person name="Mungall K.L."/>
            <person name="Ketley J.M."/>
            <person name="Churcher C.M."/>
            <person name="Basham D."/>
            <person name="Chillingworth T."/>
            <person name="Davies R.M."/>
            <person name="Feltwell T."/>
            <person name="Holroyd S."/>
            <person name="Jagels K."/>
            <person name="Karlyshev A.V."/>
            <person name="Moule S."/>
            <person name="Pallen M.J."/>
            <person name="Penn C.W."/>
            <person name="Quail M.A."/>
            <person name="Rajandream M.A."/>
            <person name="Rutherford K.M."/>
            <person name="van Vliet A.H.M."/>
            <person name="Whitehead S."/>
            <person name="Barrell B.G."/>
        </authorList>
    </citation>
    <scope>NUCLEOTIDE SEQUENCE [LARGE SCALE GENOMIC DNA]</scope>
    <source>
        <strain>ATCC 700819 / NCTC 11168</strain>
    </source>
</reference>
<accession>Q9PN30</accession>
<accession>Q0P8Y8</accession>
<organism>
    <name type="scientific">Campylobacter jejuni subsp. jejuni serotype O:2 (strain ATCC 700819 / NCTC 11168)</name>
    <dbReference type="NCBI Taxonomy" id="192222"/>
    <lineage>
        <taxon>Bacteria</taxon>
        <taxon>Pseudomonadati</taxon>
        <taxon>Campylobacterota</taxon>
        <taxon>Epsilonproteobacteria</taxon>
        <taxon>Campylobacterales</taxon>
        <taxon>Campylobacteraceae</taxon>
        <taxon>Campylobacter</taxon>
    </lineage>
</organism>
<sequence length="613" mass="71590">MKKAKLIFKDNTPFSLDFDDFYFNFKDGLNESKFVYTHSFEWKNQENFIIAESGFGIGLNFFLTLKRFLETTPSKRPKKLFYISVEAFYIEKEQLREIYQKLEFYEEFKELLEQFLKFYPKAKEGIYRFYFEDCFLDLVFEDIAVLKELDFKADVWYLDGFSPNKNSQMFDENLIFEVARLSKKNTQICTFSSASFLQKNLKKYGFRVEKTKGFRKREMIKAYLENELEFKDKEAYFSRTFSSLKNKKVAIIGAGISSAVLAYELSLRGFEIDIFEKHLELGKGASGNESGILSSLILKPKVNLGEFSELSFIEASRFYRQILDLEFKGVVEFAHNDLMQERFDTQRENVLFKISKNQAFLEEGGVIFPKKLVKNLFEKSKACIYFNHEFQAYKFENGCFSLKFKNDVVKSDYAVLIYAMGADAKDFVFYDEMKLSKVRGQVTHLKPFLDTPFPLSSKAYICPVKDDLQVIGASYDRLNASLESKEEDDKQNIENIADFMDKNTKLEIIGSKVGFRSYSSDRFMIVGNAYDEAFYKEEYKALLWTKNKEQKPAKMSCNLYFNFAHGSRGFSTSVLAARYLCALINNEPLCLEKKYIHAIHPARFLIRKLKKGL</sequence>
<feature type="chain" id="PRO_0000095009" description="tRNA 5-methylaminomethyl-2-thiouridine biosynthesis bifunctional protein MnmC">
    <location>
        <begin position="1"/>
        <end position="613"/>
    </location>
</feature>
<feature type="region of interest" description="tRNA (mnm(5)s(2)U34)-methyltransferase">
    <location>
        <begin position="1"/>
        <end position="225"/>
    </location>
</feature>
<feature type="region of interest" description="FAD-dependent cmnm(5)s(2)U34 oxidoreductase">
    <location>
        <begin position="252"/>
        <end position="613"/>
    </location>
</feature>
<gene>
    <name evidence="1" type="primary">mnmC</name>
    <name type="ordered locus">Cj1268c</name>
</gene>
<evidence type="ECO:0000255" key="1">
    <source>
        <dbReference type="HAMAP-Rule" id="MF_01102"/>
    </source>
</evidence>
<keyword id="KW-0963">Cytoplasm</keyword>
<keyword id="KW-0274">FAD</keyword>
<keyword id="KW-0285">Flavoprotein</keyword>
<keyword id="KW-0489">Methyltransferase</keyword>
<keyword id="KW-0511">Multifunctional enzyme</keyword>
<keyword id="KW-0560">Oxidoreductase</keyword>
<keyword id="KW-1185">Reference proteome</keyword>
<keyword id="KW-0949">S-adenosyl-L-methionine</keyword>
<keyword id="KW-0808">Transferase</keyword>
<keyword id="KW-0819">tRNA processing</keyword>
<comment type="function">
    <text evidence="1">Catalyzes the last two steps in the biosynthesis of 5-methylaminomethyl-2-thiouridine (mnm(5)s(2)U) at the wobble position (U34) in tRNA. Catalyzes the FAD-dependent demodification of cmnm(5)s(2)U34 to nm(5)s(2)U34, followed by the transfer of a methyl group from S-adenosyl-L-methionine to nm(5)s(2)U34, to form mnm(5)s(2)U34.</text>
</comment>
<comment type="catalytic activity">
    <reaction evidence="1">
        <text>5-aminomethyl-2-thiouridine(34) in tRNA + S-adenosyl-L-methionine = 5-methylaminomethyl-2-thiouridine(34) in tRNA + S-adenosyl-L-homocysteine + H(+)</text>
        <dbReference type="Rhea" id="RHEA:19569"/>
        <dbReference type="Rhea" id="RHEA-COMP:10195"/>
        <dbReference type="Rhea" id="RHEA-COMP:10197"/>
        <dbReference type="ChEBI" id="CHEBI:15378"/>
        <dbReference type="ChEBI" id="CHEBI:57856"/>
        <dbReference type="ChEBI" id="CHEBI:59789"/>
        <dbReference type="ChEBI" id="CHEBI:74454"/>
        <dbReference type="ChEBI" id="CHEBI:74455"/>
        <dbReference type="EC" id="2.1.1.61"/>
    </reaction>
</comment>
<comment type="cofactor">
    <cofactor evidence="1">
        <name>FAD</name>
        <dbReference type="ChEBI" id="CHEBI:57692"/>
    </cofactor>
</comment>
<comment type="subcellular location">
    <subcellularLocation>
        <location evidence="1">Cytoplasm</location>
    </subcellularLocation>
</comment>
<comment type="similarity">
    <text evidence="1">In the N-terminal section; belongs to the methyltransferase superfamily. tRNA (mnm(5)s(2)U34)-methyltransferase family.</text>
</comment>
<comment type="similarity">
    <text evidence="1">In the C-terminal section; belongs to the DAO family.</text>
</comment>
<protein>
    <recommendedName>
        <fullName evidence="1">tRNA 5-methylaminomethyl-2-thiouridine biosynthesis bifunctional protein MnmC</fullName>
        <shortName evidence="1">tRNA mnm(5)s(2)U biosynthesis bifunctional protein</shortName>
    </recommendedName>
    <domain>
        <recommendedName>
            <fullName evidence="1">tRNA (mnm(5)s(2)U34)-methyltransferase</fullName>
            <ecNumber evidence="1">2.1.1.61</ecNumber>
        </recommendedName>
    </domain>
    <domain>
        <recommendedName>
            <fullName evidence="1">FAD-dependent cmnm(5)s(2)U34 oxidoreductase</fullName>
            <ecNumber evidence="1">1.5.-.-</ecNumber>
        </recommendedName>
    </domain>
</protein>